<proteinExistence type="inferred from homology"/>
<sequence length="159" mass="17837">MQKRAIYPGTFDPITNGHIDIVTRATQMFDHVILAIAASPSKKPMFTLEERVALAQQATAHLGNVEVVGFSDLMANFARNQHATVLIRGLRAVADFEYEMQLAHMNRHLMPELESVFLMPSKEWSFISSSLVKEVARHQGDVTHFLPENVHQALMAKLA</sequence>
<gene>
    <name evidence="1" type="primary">coaD</name>
    <name type="ordered locus">BWG_3325</name>
</gene>
<protein>
    <recommendedName>
        <fullName evidence="1">Phosphopantetheine adenylyltransferase</fullName>
        <ecNumber evidence="1">2.7.7.3</ecNumber>
    </recommendedName>
    <alternativeName>
        <fullName evidence="1">Dephospho-CoA pyrophosphorylase</fullName>
    </alternativeName>
    <alternativeName>
        <fullName evidence="1">Pantetheine-phosphate adenylyltransferase</fullName>
        <shortName evidence="1">PPAT</shortName>
    </alternativeName>
</protein>
<evidence type="ECO:0000255" key="1">
    <source>
        <dbReference type="HAMAP-Rule" id="MF_00151"/>
    </source>
</evidence>
<dbReference type="EC" id="2.7.7.3" evidence="1"/>
<dbReference type="EMBL" id="CP001396">
    <property type="protein sequence ID" value="ACR63971.1"/>
    <property type="molecule type" value="Genomic_DNA"/>
</dbReference>
<dbReference type="RefSeq" id="WP_001171866.1">
    <property type="nucleotide sequence ID" value="NC_012759.1"/>
</dbReference>
<dbReference type="SMR" id="C4ZXM6"/>
<dbReference type="GeneID" id="75202203"/>
<dbReference type="KEGG" id="ebw:BWG_3325"/>
<dbReference type="HOGENOM" id="CLU_100149_0_1_6"/>
<dbReference type="UniPathway" id="UPA00241">
    <property type="reaction ID" value="UER00355"/>
</dbReference>
<dbReference type="GO" id="GO:0005737">
    <property type="term" value="C:cytoplasm"/>
    <property type="evidence" value="ECO:0007669"/>
    <property type="project" value="UniProtKB-SubCell"/>
</dbReference>
<dbReference type="GO" id="GO:0005524">
    <property type="term" value="F:ATP binding"/>
    <property type="evidence" value="ECO:0007669"/>
    <property type="project" value="UniProtKB-KW"/>
</dbReference>
<dbReference type="GO" id="GO:0004595">
    <property type="term" value="F:pantetheine-phosphate adenylyltransferase activity"/>
    <property type="evidence" value="ECO:0007669"/>
    <property type="project" value="UniProtKB-UniRule"/>
</dbReference>
<dbReference type="GO" id="GO:0015937">
    <property type="term" value="P:coenzyme A biosynthetic process"/>
    <property type="evidence" value="ECO:0007669"/>
    <property type="project" value="UniProtKB-UniRule"/>
</dbReference>
<dbReference type="CDD" id="cd02163">
    <property type="entry name" value="PPAT"/>
    <property type="match status" value="1"/>
</dbReference>
<dbReference type="FunFam" id="3.40.50.620:FF:000012">
    <property type="entry name" value="Phosphopantetheine adenylyltransferase"/>
    <property type="match status" value="1"/>
</dbReference>
<dbReference type="Gene3D" id="3.40.50.620">
    <property type="entry name" value="HUPs"/>
    <property type="match status" value="1"/>
</dbReference>
<dbReference type="HAMAP" id="MF_00151">
    <property type="entry name" value="PPAT_bact"/>
    <property type="match status" value="1"/>
</dbReference>
<dbReference type="InterPro" id="IPR004821">
    <property type="entry name" value="Cyt_trans-like"/>
</dbReference>
<dbReference type="InterPro" id="IPR001980">
    <property type="entry name" value="PPAT"/>
</dbReference>
<dbReference type="InterPro" id="IPR014729">
    <property type="entry name" value="Rossmann-like_a/b/a_fold"/>
</dbReference>
<dbReference type="NCBIfam" id="TIGR01510">
    <property type="entry name" value="coaD_prev_kdtB"/>
    <property type="match status" value="1"/>
</dbReference>
<dbReference type="NCBIfam" id="TIGR00125">
    <property type="entry name" value="cyt_tran_rel"/>
    <property type="match status" value="1"/>
</dbReference>
<dbReference type="PANTHER" id="PTHR21342">
    <property type="entry name" value="PHOSPHOPANTETHEINE ADENYLYLTRANSFERASE"/>
    <property type="match status" value="1"/>
</dbReference>
<dbReference type="PANTHER" id="PTHR21342:SF1">
    <property type="entry name" value="PHOSPHOPANTETHEINE ADENYLYLTRANSFERASE"/>
    <property type="match status" value="1"/>
</dbReference>
<dbReference type="Pfam" id="PF01467">
    <property type="entry name" value="CTP_transf_like"/>
    <property type="match status" value="1"/>
</dbReference>
<dbReference type="PRINTS" id="PR01020">
    <property type="entry name" value="LPSBIOSNTHSS"/>
</dbReference>
<dbReference type="SUPFAM" id="SSF52374">
    <property type="entry name" value="Nucleotidylyl transferase"/>
    <property type="match status" value="1"/>
</dbReference>
<reference key="1">
    <citation type="journal article" date="2009" name="J. Bacteriol.">
        <title>Genomic sequencing reveals regulatory mutations and recombinational events in the widely used MC4100 lineage of Escherichia coli K-12.</title>
        <authorList>
            <person name="Ferenci T."/>
            <person name="Zhou Z."/>
            <person name="Betteridge T."/>
            <person name="Ren Y."/>
            <person name="Liu Y."/>
            <person name="Feng L."/>
            <person name="Reeves P.R."/>
            <person name="Wang L."/>
        </authorList>
    </citation>
    <scope>NUCLEOTIDE SEQUENCE [LARGE SCALE GENOMIC DNA]</scope>
    <source>
        <strain>K12 / MC4100 / BW2952</strain>
    </source>
</reference>
<feature type="chain" id="PRO_1000203418" description="Phosphopantetheine adenylyltransferase">
    <location>
        <begin position="1"/>
        <end position="159"/>
    </location>
</feature>
<feature type="binding site" evidence="1">
    <location>
        <begin position="10"/>
        <end position="11"/>
    </location>
    <ligand>
        <name>ATP</name>
        <dbReference type="ChEBI" id="CHEBI:30616"/>
    </ligand>
</feature>
<feature type="binding site" evidence="1">
    <location>
        <position position="10"/>
    </location>
    <ligand>
        <name>substrate</name>
    </ligand>
</feature>
<feature type="binding site" evidence="1">
    <location>
        <position position="18"/>
    </location>
    <ligand>
        <name>ATP</name>
        <dbReference type="ChEBI" id="CHEBI:30616"/>
    </ligand>
</feature>
<feature type="binding site" evidence="1">
    <location>
        <position position="42"/>
    </location>
    <ligand>
        <name>substrate</name>
    </ligand>
</feature>
<feature type="binding site" evidence="1">
    <location>
        <position position="74"/>
    </location>
    <ligand>
        <name>substrate</name>
    </ligand>
</feature>
<feature type="binding site" evidence="1">
    <location>
        <position position="88"/>
    </location>
    <ligand>
        <name>substrate</name>
    </ligand>
</feature>
<feature type="binding site" evidence="1">
    <location>
        <begin position="89"/>
        <end position="91"/>
    </location>
    <ligand>
        <name>ATP</name>
        <dbReference type="ChEBI" id="CHEBI:30616"/>
    </ligand>
</feature>
<feature type="binding site" evidence="1">
    <location>
        <position position="99"/>
    </location>
    <ligand>
        <name>ATP</name>
        <dbReference type="ChEBI" id="CHEBI:30616"/>
    </ligand>
</feature>
<feature type="binding site" evidence="1">
    <location>
        <begin position="124"/>
        <end position="130"/>
    </location>
    <ligand>
        <name>ATP</name>
        <dbReference type="ChEBI" id="CHEBI:30616"/>
    </ligand>
</feature>
<feature type="site" description="Transition state stabilizer" evidence="1">
    <location>
        <position position="18"/>
    </location>
</feature>
<comment type="function">
    <text evidence="1">Reversibly transfers an adenylyl group from ATP to 4'-phosphopantetheine, yielding dephospho-CoA (dPCoA) and pyrophosphate.</text>
</comment>
<comment type="catalytic activity">
    <reaction evidence="1">
        <text>(R)-4'-phosphopantetheine + ATP + H(+) = 3'-dephospho-CoA + diphosphate</text>
        <dbReference type="Rhea" id="RHEA:19801"/>
        <dbReference type="ChEBI" id="CHEBI:15378"/>
        <dbReference type="ChEBI" id="CHEBI:30616"/>
        <dbReference type="ChEBI" id="CHEBI:33019"/>
        <dbReference type="ChEBI" id="CHEBI:57328"/>
        <dbReference type="ChEBI" id="CHEBI:61723"/>
        <dbReference type="EC" id="2.7.7.3"/>
    </reaction>
</comment>
<comment type="cofactor">
    <cofactor evidence="1">
        <name>Mg(2+)</name>
        <dbReference type="ChEBI" id="CHEBI:18420"/>
    </cofactor>
</comment>
<comment type="pathway">
    <text evidence="1">Cofactor biosynthesis; coenzyme A biosynthesis; CoA from (R)-pantothenate: step 4/5.</text>
</comment>
<comment type="subunit">
    <text evidence="1">Homohexamer.</text>
</comment>
<comment type="subcellular location">
    <subcellularLocation>
        <location evidence="1">Cytoplasm</location>
    </subcellularLocation>
</comment>
<comment type="similarity">
    <text evidence="1">Belongs to the bacterial CoaD family.</text>
</comment>
<keyword id="KW-0067">ATP-binding</keyword>
<keyword id="KW-0173">Coenzyme A biosynthesis</keyword>
<keyword id="KW-0963">Cytoplasm</keyword>
<keyword id="KW-0460">Magnesium</keyword>
<keyword id="KW-0547">Nucleotide-binding</keyword>
<keyword id="KW-0548">Nucleotidyltransferase</keyword>
<keyword id="KW-0808">Transferase</keyword>
<name>COAD_ECOBW</name>
<accession>C4ZXM6</accession>
<organism>
    <name type="scientific">Escherichia coli (strain K12 / MC4100 / BW2952)</name>
    <dbReference type="NCBI Taxonomy" id="595496"/>
    <lineage>
        <taxon>Bacteria</taxon>
        <taxon>Pseudomonadati</taxon>
        <taxon>Pseudomonadota</taxon>
        <taxon>Gammaproteobacteria</taxon>
        <taxon>Enterobacterales</taxon>
        <taxon>Enterobacteriaceae</taxon>
        <taxon>Escherichia</taxon>
    </lineage>
</organism>